<keyword id="KW-0963">Cytoplasm</keyword>
<keyword id="KW-0396">Initiation factor</keyword>
<keyword id="KW-0648">Protein biosynthesis</keyword>
<organism>
    <name type="scientific">Streptococcus pyogenes serotype M18 (strain MGAS8232)</name>
    <dbReference type="NCBI Taxonomy" id="186103"/>
    <lineage>
        <taxon>Bacteria</taxon>
        <taxon>Bacillati</taxon>
        <taxon>Bacillota</taxon>
        <taxon>Bacilli</taxon>
        <taxon>Lactobacillales</taxon>
        <taxon>Streptococcaceae</taxon>
        <taxon>Streptococcus</taxon>
    </lineage>
</organism>
<feature type="chain" id="PRO_0000177593" description="Translation initiation factor IF-3">
    <location>
        <begin position="1"/>
        <end position="176"/>
    </location>
</feature>
<protein>
    <recommendedName>
        <fullName evidence="1">Translation initiation factor IF-3</fullName>
    </recommendedName>
</protein>
<proteinExistence type="inferred from homology"/>
<comment type="function">
    <text evidence="1">IF-3 binds to the 30S ribosomal subunit and shifts the equilibrium between 70S ribosomes and their 50S and 30S subunits in favor of the free subunits, thus enhancing the availability of 30S subunits on which protein synthesis initiation begins.</text>
</comment>
<comment type="subunit">
    <text evidence="1">Monomer.</text>
</comment>
<comment type="subcellular location">
    <subcellularLocation>
        <location evidence="1">Cytoplasm</location>
    </subcellularLocation>
</comment>
<comment type="similarity">
    <text evidence="1">Belongs to the IF-3 family.</text>
</comment>
<reference key="1">
    <citation type="journal article" date="2002" name="Proc. Natl. Acad. Sci. U.S.A.">
        <title>Genome sequence and comparative microarray analysis of serotype M18 group A Streptococcus strains associated with acute rheumatic fever outbreaks.</title>
        <authorList>
            <person name="Smoot J.C."/>
            <person name="Barbian K.D."/>
            <person name="Van Gompel J.J."/>
            <person name="Smoot L.M."/>
            <person name="Chaussee M.S."/>
            <person name="Sylva G.L."/>
            <person name="Sturdevant D.E."/>
            <person name="Ricklefs S.M."/>
            <person name="Porcella S.F."/>
            <person name="Parkins L.D."/>
            <person name="Beres S.B."/>
            <person name="Campbell D.S."/>
            <person name="Smith T.M."/>
            <person name="Zhang Q."/>
            <person name="Kapur V."/>
            <person name="Daly J.A."/>
            <person name="Veasy L.G."/>
            <person name="Musser J.M."/>
        </authorList>
    </citation>
    <scope>NUCLEOTIDE SEQUENCE [LARGE SCALE GENOMIC DNA]</scope>
    <source>
        <strain>MGAS8232</strain>
    </source>
</reference>
<name>IF3_STRP8</name>
<gene>
    <name evidence="1" type="primary">infC</name>
    <name type="ordered locus">spyM18_0866</name>
</gene>
<evidence type="ECO:0000255" key="1">
    <source>
        <dbReference type="HAMAP-Rule" id="MF_00080"/>
    </source>
</evidence>
<sequence length="176" mass="20054">MKIIAKKDLFINDEIRVREVRLVGLEGEQLGIKPLSEAQSLADASNVDLVLIQPQAVPPVAKLMDYGKFKFEYQKKQKEQRKKQSVVTVKEVRLSPVIDKGDFETKLRNGRKFLEKGNKVKVSIRFKGRMITHKEIGAKVLADFAEATQDIAIIEQRAKMDGRQMFMQLAPISDKK</sequence>
<accession>P65148</accession>
<accession>P58081</accession>
<dbReference type="EMBL" id="AE009949">
    <property type="protein sequence ID" value="AAL97520.1"/>
    <property type="molecule type" value="Genomic_DNA"/>
</dbReference>
<dbReference type="RefSeq" id="WP_002985152.1">
    <property type="nucleotide sequence ID" value="NC_003485.1"/>
</dbReference>
<dbReference type="SMR" id="P65148"/>
<dbReference type="GeneID" id="69901077"/>
<dbReference type="KEGG" id="spm:spyM18_0866"/>
<dbReference type="HOGENOM" id="CLU_054919_3_2_9"/>
<dbReference type="GO" id="GO:0005829">
    <property type="term" value="C:cytosol"/>
    <property type="evidence" value="ECO:0007669"/>
    <property type="project" value="TreeGrafter"/>
</dbReference>
<dbReference type="GO" id="GO:0016020">
    <property type="term" value="C:membrane"/>
    <property type="evidence" value="ECO:0007669"/>
    <property type="project" value="TreeGrafter"/>
</dbReference>
<dbReference type="GO" id="GO:0043022">
    <property type="term" value="F:ribosome binding"/>
    <property type="evidence" value="ECO:0007669"/>
    <property type="project" value="TreeGrafter"/>
</dbReference>
<dbReference type="GO" id="GO:0003743">
    <property type="term" value="F:translation initiation factor activity"/>
    <property type="evidence" value="ECO:0007669"/>
    <property type="project" value="UniProtKB-UniRule"/>
</dbReference>
<dbReference type="GO" id="GO:0032790">
    <property type="term" value="P:ribosome disassembly"/>
    <property type="evidence" value="ECO:0007669"/>
    <property type="project" value="TreeGrafter"/>
</dbReference>
<dbReference type="FunFam" id="3.10.20.80:FF:000001">
    <property type="entry name" value="Translation initiation factor IF-3"/>
    <property type="match status" value="1"/>
</dbReference>
<dbReference type="FunFam" id="3.30.110.10:FF:000001">
    <property type="entry name" value="Translation initiation factor IF-3"/>
    <property type="match status" value="1"/>
</dbReference>
<dbReference type="Gene3D" id="3.30.110.10">
    <property type="entry name" value="Translation initiation factor 3 (IF-3), C-terminal domain"/>
    <property type="match status" value="1"/>
</dbReference>
<dbReference type="Gene3D" id="3.10.20.80">
    <property type="entry name" value="Translation initiation factor 3 (IF-3), N-terminal domain"/>
    <property type="match status" value="1"/>
</dbReference>
<dbReference type="HAMAP" id="MF_00080">
    <property type="entry name" value="IF_3"/>
    <property type="match status" value="1"/>
</dbReference>
<dbReference type="InterPro" id="IPR036788">
    <property type="entry name" value="T_IF-3_C_sf"/>
</dbReference>
<dbReference type="InterPro" id="IPR036787">
    <property type="entry name" value="T_IF-3_N_sf"/>
</dbReference>
<dbReference type="InterPro" id="IPR019813">
    <property type="entry name" value="Translation_initiation_fac3_CS"/>
</dbReference>
<dbReference type="InterPro" id="IPR001288">
    <property type="entry name" value="Translation_initiation_fac_3"/>
</dbReference>
<dbReference type="InterPro" id="IPR019815">
    <property type="entry name" value="Translation_initiation_fac_3_C"/>
</dbReference>
<dbReference type="InterPro" id="IPR019814">
    <property type="entry name" value="Translation_initiation_fac_3_N"/>
</dbReference>
<dbReference type="NCBIfam" id="TIGR00168">
    <property type="entry name" value="infC"/>
    <property type="match status" value="1"/>
</dbReference>
<dbReference type="PANTHER" id="PTHR10938">
    <property type="entry name" value="TRANSLATION INITIATION FACTOR IF-3"/>
    <property type="match status" value="1"/>
</dbReference>
<dbReference type="PANTHER" id="PTHR10938:SF0">
    <property type="entry name" value="TRANSLATION INITIATION FACTOR IF-3, MITOCHONDRIAL"/>
    <property type="match status" value="1"/>
</dbReference>
<dbReference type="Pfam" id="PF00707">
    <property type="entry name" value="IF3_C"/>
    <property type="match status" value="1"/>
</dbReference>
<dbReference type="Pfam" id="PF05198">
    <property type="entry name" value="IF3_N"/>
    <property type="match status" value="1"/>
</dbReference>
<dbReference type="SUPFAM" id="SSF55200">
    <property type="entry name" value="Translation initiation factor IF3, C-terminal domain"/>
    <property type="match status" value="1"/>
</dbReference>
<dbReference type="SUPFAM" id="SSF54364">
    <property type="entry name" value="Translation initiation factor IF3, N-terminal domain"/>
    <property type="match status" value="1"/>
</dbReference>
<dbReference type="PROSITE" id="PS00938">
    <property type="entry name" value="IF3"/>
    <property type="match status" value="1"/>
</dbReference>